<name>YSH1_ASPFU</name>
<protein>
    <recommendedName>
        <fullName>Endoribonuclease ysh1</fullName>
        <ecNumber>3.1.27.-</ecNumber>
    </recommendedName>
    <alternativeName>
        <fullName>mRNA 3'-end-processing protein ysh1</fullName>
    </alternativeName>
</protein>
<sequence length="872" mass="96331">MATKRKASALNAAVDDEPVDPSDELAFYCLGGGNEVGRSCHIIQYKGKTVMLDAGMHPAKEGFSALPFFDEFDLSTVDILLISHFHVDHSSALPYVLSKTNFKGRVFMTHATKAIYKWLIQDNVRVSNTASSSDQRTTLYTEHDHLSTLPLIETIDFNTTHTVNSIRITPFPAGHVLGAAMFLISIAGLNILFTGDYSREEDRHLIPAEVPKGIKIDVLITESTFGISTNPPRLEREAALMKSITGILNRGGRVLMPVFALGRAQELLLILDEYWETHPELQKIPIYYIGNTARRCMVVYQTYIGAMNDNIKRLFRQRMAEAEASGDKSASAGPWDFKFVRSLRSLERFDDVGGCVMLASPGMLQTGTSRELLERWAPNERNGVVMTGYSVEGTMAKQLLNEPEQIPAVMSRSAGGVSRRGLAGTDEEQKIMIPRRCTVDEISFAAHVDGVENRNFIEEVAAPVVILVHGEKHQMMRLKSKLLSLNADKAVKVKVYTPANCDEVRIPFRKDKIAKVVGKLAQVAPPSDQDDGRLMSGVLVQNGFDLSLMAPDDLREYAGLTTTTITCKQHITLSSASMDLIRWALEGTFGAIEELGSNERSKVKEESTKAVNGEQEIKEEPADEEIPMEETQTYLVMGCVLIRYHSRTREVELEWEGNMMNDGVADAVMAVLLTVESSPASVKQSAKLKHHHHHHSDLELPNPHAHQGPEETFENLLMMLEAQFGSNIAPIERPRIPSGIRANRTTKADPSVSAAVKTKSDAAGETPAESQEDESTEEIEAAELARLQALGIPYPGIEIKVDKHVARVWLENFEVECANTVLRDRVRVVIERAVETVSSMWGEGHPAARASNGTQGNKEVAVSKSNEIEARA</sequence>
<reference key="1">
    <citation type="journal article" date="2005" name="Nature">
        <title>Genomic sequence of the pathogenic and allergenic filamentous fungus Aspergillus fumigatus.</title>
        <authorList>
            <person name="Nierman W.C."/>
            <person name="Pain A."/>
            <person name="Anderson M.J."/>
            <person name="Wortman J.R."/>
            <person name="Kim H.S."/>
            <person name="Arroyo J."/>
            <person name="Berriman M."/>
            <person name="Abe K."/>
            <person name="Archer D.B."/>
            <person name="Bermejo C."/>
            <person name="Bennett J.W."/>
            <person name="Bowyer P."/>
            <person name="Chen D."/>
            <person name="Collins M."/>
            <person name="Coulsen R."/>
            <person name="Davies R."/>
            <person name="Dyer P.S."/>
            <person name="Farman M.L."/>
            <person name="Fedorova N."/>
            <person name="Fedorova N.D."/>
            <person name="Feldblyum T.V."/>
            <person name="Fischer R."/>
            <person name="Fosker N."/>
            <person name="Fraser A."/>
            <person name="Garcia J.L."/>
            <person name="Garcia M.J."/>
            <person name="Goble A."/>
            <person name="Goldman G.H."/>
            <person name="Gomi K."/>
            <person name="Griffith-Jones S."/>
            <person name="Gwilliam R."/>
            <person name="Haas B.J."/>
            <person name="Haas H."/>
            <person name="Harris D.E."/>
            <person name="Horiuchi H."/>
            <person name="Huang J."/>
            <person name="Humphray S."/>
            <person name="Jimenez J."/>
            <person name="Keller N."/>
            <person name="Khouri H."/>
            <person name="Kitamoto K."/>
            <person name="Kobayashi T."/>
            <person name="Konzack S."/>
            <person name="Kulkarni R."/>
            <person name="Kumagai T."/>
            <person name="Lafton A."/>
            <person name="Latge J.-P."/>
            <person name="Li W."/>
            <person name="Lord A."/>
            <person name="Lu C."/>
            <person name="Majoros W.H."/>
            <person name="May G.S."/>
            <person name="Miller B.L."/>
            <person name="Mohamoud Y."/>
            <person name="Molina M."/>
            <person name="Monod M."/>
            <person name="Mouyna I."/>
            <person name="Mulligan S."/>
            <person name="Murphy L.D."/>
            <person name="O'Neil S."/>
            <person name="Paulsen I."/>
            <person name="Penalva M.A."/>
            <person name="Pertea M."/>
            <person name="Price C."/>
            <person name="Pritchard B.L."/>
            <person name="Quail M.A."/>
            <person name="Rabbinowitsch E."/>
            <person name="Rawlins N."/>
            <person name="Rajandream M.A."/>
            <person name="Reichard U."/>
            <person name="Renauld H."/>
            <person name="Robson G.D."/>
            <person name="Rodriguez de Cordoba S."/>
            <person name="Rodriguez-Pena J.M."/>
            <person name="Ronning C.M."/>
            <person name="Rutter S."/>
            <person name="Salzberg S.L."/>
            <person name="Sanchez M."/>
            <person name="Sanchez-Ferrero J.C."/>
            <person name="Saunders D."/>
            <person name="Seeger K."/>
            <person name="Squares R."/>
            <person name="Squares S."/>
            <person name="Takeuchi M."/>
            <person name="Tekaia F."/>
            <person name="Turner G."/>
            <person name="Vazquez de Aldana C.R."/>
            <person name="Weidman J."/>
            <person name="White O."/>
            <person name="Woodward J.R."/>
            <person name="Yu J.-H."/>
            <person name="Fraser C.M."/>
            <person name="Galagan J.E."/>
            <person name="Asai K."/>
            <person name="Machida M."/>
            <person name="Hall N."/>
            <person name="Barrell B.G."/>
            <person name="Denning D.W."/>
        </authorList>
    </citation>
    <scope>NUCLEOTIDE SEQUENCE [LARGE SCALE GENOMIC DNA]</scope>
    <source>
        <strain>ATCC MYA-4609 / CBS 101355 / FGSC A1100 / Af293</strain>
    </source>
</reference>
<proteinExistence type="inferred from homology"/>
<organism>
    <name type="scientific">Aspergillus fumigatus (strain ATCC MYA-4609 / CBS 101355 / FGSC A1100 / Af293)</name>
    <name type="common">Neosartorya fumigata</name>
    <dbReference type="NCBI Taxonomy" id="330879"/>
    <lineage>
        <taxon>Eukaryota</taxon>
        <taxon>Fungi</taxon>
        <taxon>Dikarya</taxon>
        <taxon>Ascomycota</taxon>
        <taxon>Pezizomycotina</taxon>
        <taxon>Eurotiomycetes</taxon>
        <taxon>Eurotiomycetidae</taxon>
        <taxon>Eurotiales</taxon>
        <taxon>Aspergillaceae</taxon>
        <taxon>Aspergillus</taxon>
        <taxon>Aspergillus subgen. Fumigati</taxon>
    </lineage>
</organism>
<evidence type="ECO:0000250" key="1"/>
<evidence type="ECO:0000255" key="2"/>
<evidence type="ECO:0000256" key="3">
    <source>
        <dbReference type="SAM" id="MobiDB-lite"/>
    </source>
</evidence>
<evidence type="ECO:0000305" key="4"/>
<comment type="function">
    <text evidence="1">Component of the cleavage factor I (CF I) involved in pre-mRNA 3'-end processing.</text>
</comment>
<comment type="subcellular location">
    <subcellularLocation>
        <location evidence="1">Nucleus</location>
    </subcellularLocation>
</comment>
<comment type="similarity">
    <text evidence="4">Belongs to the metallo-beta-lactamase superfamily. RNA-metabolizing metallo-beta-lactamase-like family. CPSF2/YSH1 subfamily.</text>
</comment>
<dbReference type="EC" id="3.1.27.-"/>
<dbReference type="EMBL" id="AAHF01000004">
    <property type="protein sequence ID" value="EAL91010.1"/>
    <property type="molecule type" value="Genomic_DNA"/>
</dbReference>
<dbReference type="RefSeq" id="XP_753048.1">
    <property type="nucleotide sequence ID" value="XM_747955.1"/>
</dbReference>
<dbReference type="SMR" id="Q4WRC2"/>
<dbReference type="FunCoup" id="Q4WRC2">
    <property type="interactions" value="960"/>
</dbReference>
<dbReference type="STRING" id="330879.Q4WRC2"/>
<dbReference type="EnsemblFungi" id="EAL91010">
    <property type="protein sequence ID" value="EAL91010"/>
    <property type="gene ID" value="AFUA_1G16800"/>
</dbReference>
<dbReference type="GeneID" id="3510074"/>
<dbReference type="KEGG" id="afm:AFUA_1G16800"/>
<dbReference type="VEuPathDB" id="FungiDB:Afu1g16800"/>
<dbReference type="eggNOG" id="KOG1137">
    <property type="taxonomic scope" value="Eukaryota"/>
</dbReference>
<dbReference type="HOGENOM" id="CLU_009673_2_1_1"/>
<dbReference type="InParanoid" id="Q4WRC2"/>
<dbReference type="OMA" id="CKQHITL"/>
<dbReference type="OrthoDB" id="10249535at2759"/>
<dbReference type="Proteomes" id="UP000002530">
    <property type="component" value="Chromosome 1"/>
</dbReference>
<dbReference type="GO" id="GO:0005847">
    <property type="term" value="C:mRNA cleavage and polyadenylation specificity factor complex"/>
    <property type="evidence" value="ECO:0000318"/>
    <property type="project" value="GO_Central"/>
</dbReference>
<dbReference type="GO" id="GO:0004534">
    <property type="term" value="F:5'-3' RNA exonuclease activity"/>
    <property type="evidence" value="ECO:0000318"/>
    <property type="project" value="GO_Central"/>
</dbReference>
<dbReference type="GO" id="GO:0046872">
    <property type="term" value="F:metal ion binding"/>
    <property type="evidence" value="ECO:0007669"/>
    <property type="project" value="UniProtKB-KW"/>
</dbReference>
<dbReference type="GO" id="GO:0003723">
    <property type="term" value="F:RNA binding"/>
    <property type="evidence" value="ECO:0000318"/>
    <property type="project" value="GO_Central"/>
</dbReference>
<dbReference type="GO" id="GO:0004521">
    <property type="term" value="F:RNA endonuclease activity"/>
    <property type="evidence" value="ECO:0000318"/>
    <property type="project" value="GO_Central"/>
</dbReference>
<dbReference type="GO" id="GO:0006397">
    <property type="term" value="P:mRNA processing"/>
    <property type="evidence" value="ECO:0007669"/>
    <property type="project" value="UniProtKB-KW"/>
</dbReference>
<dbReference type="GO" id="GO:0044550">
    <property type="term" value="P:secondary metabolite biosynthetic process"/>
    <property type="evidence" value="ECO:0007669"/>
    <property type="project" value="UniProtKB-ARBA"/>
</dbReference>
<dbReference type="CDD" id="cd16292">
    <property type="entry name" value="CPSF3-like_MBL-fold"/>
    <property type="match status" value="1"/>
</dbReference>
<dbReference type="FunFam" id="3.60.15.10:FF:000001">
    <property type="entry name" value="Cleavage and polyadenylation specificity factor"/>
    <property type="match status" value="1"/>
</dbReference>
<dbReference type="FunFam" id="3.40.50.10890:FF:000004">
    <property type="entry name" value="Cleavage and polyadenylation specifity factor"/>
    <property type="match status" value="1"/>
</dbReference>
<dbReference type="Gene3D" id="3.40.50.10890">
    <property type="match status" value="1"/>
</dbReference>
<dbReference type="Gene3D" id="3.60.15.10">
    <property type="entry name" value="Ribonuclease Z/Hydroxyacylglutathione hydrolase-like"/>
    <property type="match status" value="1"/>
</dbReference>
<dbReference type="InterPro" id="IPR022712">
    <property type="entry name" value="Beta_Casp"/>
</dbReference>
<dbReference type="InterPro" id="IPR021718">
    <property type="entry name" value="CPSF73-100_C"/>
</dbReference>
<dbReference type="InterPro" id="IPR050698">
    <property type="entry name" value="MBL"/>
</dbReference>
<dbReference type="InterPro" id="IPR001279">
    <property type="entry name" value="Metallo-B-lactamas"/>
</dbReference>
<dbReference type="InterPro" id="IPR036866">
    <property type="entry name" value="RibonucZ/Hydroxyglut_hydro"/>
</dbReference>
<dbReference type="InterPro" id="IPR011108">
    <property type="entry name" value="RMMBL"/>
</dbReference>
<dbReference type="PANTHER" id="PTHR11203">
    <property type="entry name" value="CLEAVAGE AND POLYADENYLATION SPECIFICITY FACTOR FAMILY MEMBER"/>
    <property type="match status" value="1"/>
</dbReference>
<dbReference type="PANTHER" id="PTHR11203:SF11">
    <property type="entry name" value="CLEAVAGE AND POLYADENYLATION SPECIFICITY FACTOR SUBUNIT 3"/>
    <property type="match status" value="1"/>
</dbReference>
<dbReference type="Pfam" id="PF10996">
    <property type="entry name" value="Beta-Casp"/>
    <property type="match status" value="1"/>
</dbReference>
<dbReference type="Pfam" id="PF11718">
    <property type="entry name" value="CPSF73-100_C"/>
    <property type="match status" value="1"/>
</dbReference>
<dbReference type="Pfam" id="PF00753">
    <property type="entry name" value="Lactamase_B"/>
    <property type="match status" value="1"/>
</dbReference>
<dbReference type="Pfam" id="PF07521">
    <property type="entry name" value="RMMBL"/>
    <property type="match status" value="1"/>
</dbReference>
<dbReference type="SMART" id="SM01027">
    <property type="entry name" value="Beta-Casp"/>
    <property type="match status" value="1"/>
</dbReference>
<dbReference type="SMART" id="SM01098">
    <property type="entry name" value="CPSF73-100_C"/>
    <property type="match status" value="1"/>
</dbReference>
<dbReference type="SMART" id="SM00849">
    <property type="entry name" value="Lactamase_B"/>
    <property type="match status" value="1"/>
</dbReference>
<dbReference type="SUPFAM" id="SSF56281">
    <property type="entry name" value="Metallo-hydrolase/oxidoreductase"/>
    <property type="match status" value="1"/>
</dbReference>
<feature type="chain" id="PRO_0000238897" description="Endoribonuclease ysh1">
    <location>
        <begin position="1"/>
        <end position="872"/>
    </location>
</feature>
<feature type="region of interest" description="Disordered" evidence="3">
    <location>
        <begin position="682"/>
        <end position="706"/>
    </location>
</feature>
<feature type="region of interest" description="Disordered" evidence="3">
    <location>
        <begin position="741"/>
        <end position="777"/>
    </location>
</feature>
<feature type="region of interest" description="Disordered" evidence="3">
    <location>
        <begin position="844"/>
        <end position="872"/>
    </location>
</feature>
<feature type="compositionally biased region" description="Basic residues" evidence="3">
    <location>
        <begin position="686"/>
        <end position="695"/>
    </location>
</feature>
<feature type="active site" description="Proton donor" evidence="2">
    <location>
        <position position="447"/>
    </location>
</feature>
<feature type="binding site" evidence="1">
    <location>
        <position position="84"/>
    </location>
    <ligand>
        <name>Zn(2+)</name>
        <dbReference type="ChEBI" id="CHEBI:29105"/>
        <label>1</label>
    </ligand>
</feature>
<feature type="binding site" evidence="1">
    <location>
        <position position="86"/>
    </location>
    <ligand>
        <name>Zn(2+)</name>
        <dbReference type="ChEBI" id="CHEBI:29105"/>
        <label>1</label>
    </ligand>
</feature>
<feature type="binding site" evidence="1">
    <location>
        <position position="88"/>
    </location>
    <ligand>
        <name>Zn(2+)</name>
        <dbReference type="ChEBI" id="CHEBI:29105"/>
        <label>2</label>
    </ligand>
</feature>
<feature type="binding site" evidence="1">
    <location>
        <position position="89"/>
    </location>
    <ligand>
        <name>Zn(2+)</name>
        <dbReference type="ChEBI" id="CHEBI:29105"/>
        <label>2</label>
    </ligand>
</feature>
<feature type="binding site" evidence="1">
    <location>
        <position position="175"/>
    </location>
    <ligand>
        <name>Zn(2+)</name>
        <dbReference type="ChEBI" id="CHEBI:29105"/>
        <label>1</label>
    </ligand>
</feature>
<feature type="binding site" evidence="1">
    <location>
        <position position="196"/>
    </location>
    <ligand>
        <name>Zn(2+)</name>
        <dbReference type="ChEBI" id="CHEBI:29105"/>
        <label>1</label>
    </ligand>
</feature>
<feature type="binding site" evidence="1">
    <location>
        <position position="196"/>
    </location>
    <ligand>
        <name>Zn(2+)</name>
        <dbReference type="ChEBI" id="CHEBI:29105"/>
        <label>2</label>
    </ligand>
</feature>
<feature type="binding site" evidence="1">
    <location>
        <position position="469"/>
    </location>
    <ligand>
        <name>Zn(2+)</name>
        <dbReference type="ChEBI" id="CHEBI:29105"/>
        <label>2</label>
    </ligand>
</feature>
<accession>Q4WRC2</accession>
<gene>
    <name type="primary">ysh1</name>
    <name type="ORF">AFUA_1G16800</name>
</gene>
<keyword id="KW-0255">Endonuclease</keyword>
<keyword id="KW-0378">Hydrolase</keyword>
<keyword id="KW-0479">Metal-binding</keyword>
<keyword id="KW-0507">mRNA processing</keyword>
<keyword id="KW-0540">Nuclease</keyword>
<keyword id="KW-0539">Nucleus</keyword>
<keyword id="KW-1185">Reference proteome</keyword>
<keyword id="KW-0862">Zinc</keyword>